<feature type="chain" id="PRO_0000260540" description="Ribosomal RNA large subunit methyltransferase H">
    <location>
        <begin position="1"/>
        <end position="156"/>
    </location>
</feature>
<feature type="binding site" evidence="1">
    <location>
        <position position="73"/>
    </location>
    <ligand>
        <name>S-adenosyl-L-methionine</name>
        <dbReference type="ChEBI" id="CHEBI:59789"/>
    </ligand>
</feature>
<feature type="binding site" evidence="1">
    <location>
        <position position="104"/>
    </location>
    <ligand>
        <name>S-adenosyl-L-methionine</name>
        <dbReference type="ChEBI" id="CHEBI:59789"/>
    </ligand>
</feature>
<feature type="binding site" evidence="1">
    <location>
        <begin position="123"/>
        <end position="128"/>
    </location>
    <ligand>
        <name>S-adenosyl-L-methionine</name>
        <dbReference type="ChEBI" id="CHEBI:59789"/>
    </ligand>
</feature>
<gene>
    <name evidence="1" type="primary">rlmH</name>
    <name type="ordered locus">Bcep18194_A5626</name>
</gene>
<accession>Q39E96</accession>
<organism>
    <name type="scientific">Burkholderia lata (strain ATCC 17760 / DSM 23089 / LMG 22485 / NCIMB 9086 / R18194 / 383)</name>
    <dbReference type="NCBI Taxonomy" id="482957"/>
    <lineage>
        <taxon>Bacteria</taxon>
        <taxon>Pseudomonadati</taxon>
        <taxon>Pseudomonadota</taxon>
        <taxon>Betaproteobacteria</taxon>
        <taxon>Burkholderiales</taxon>
        <taxon>Burkholderiaceae</taxon>
        <taxon>Burkholderia</taxon>
        <taxon>Burkholderia cepacia complex</taxon>
    </lineage>
</organism>
<reference key="1">
    <citation type="submission" date="2005-10" db="EMBL/GenBank/DDBJ databases">
        <title>Complete sequence of chromosome 1 of Burkholderia sp. 383.</title>
        <authorList>
            <consortium name="US DOE Joint Genome Institute"/>
            <person name="Copeland A."/>
            <person name="Lucas S."/>
            <person name="Lapidus A."/>
            <person name="Barry K."/>
            <person name="Detter J.C."/>
            <person name="Glavina T."/>
            <person name="Hammon N."/>
            <person name="Israni S."/>
            <person name="Pitluck S."/>
            <person name="Chain P."/>
            <person name="Malfatti S."/>
            <person name="Shin M."/>
            <person name="Vergez L."/>
            <person name="Schmutz J."/>
            <person name="Larimer F."/>
            <person name="Land M."/>
            <person name="Kyrpides N."/>
            <person name="Lykidis A."/>
            <person name="Richardson P."/>
        </authorList>
    </citation>
    <scope>NUCLEOTIDE SEQUENCE [LARGE SCALE GENOMIC DNA]</scope>
    <source>
        <strain>ATCC 17760 / DSM 23089 / LMG 22485 / NCIMB 9086 / R18194 / 383</strain>
    </source>
</reference>
<sequence length="156" mass="17500">MKLFILAVGHKMPGWIASGFDEYTKRMPPELRIELREIKPELRSGGRSAESVMAAERQKIEAALPKGARLVALDERGRDWTTMQLAQALPGWQQDGRDVAFVIGGADGLDPELKARADTLLRISSMTLPHGMVRVLLAEQLYRAWSITQNHPYHRA</sequence>
<evidence type="ECO:0000255" key="1">
    <source>
        <dbReference type="HAMAP-Rule" id="MF_00658"/>
    </source>
</evidence>
<protein>
    <recommendedName>
        <fullName evidence="1">Ribosomal RNA large subunit methyltransferase H</fullName>
        <ecNumber evidence="1">2.1.1.177</ecNumber>
    </recommendedName>
    <alternativeName>
        <fullName evidence="1">23S rRNA (pseudouridine1915-N3)-methyltransferase</fullName>
    </alternativeName>
    <alternativeName>
        <fullName evidence="1">23S rRNA m3Psi1915 methyltransferase</fullName>
    </alternativeName>
    <alternativeName>
        <fullName evidence="1">rRNA (pseudouridine-N3-)-methyltransferase RlmH</fullName>
    </alternativeName>
</protein>
<proteinExistence type="inferred from homology"/>
<keyword id="KW-0963">Cytoplasm</keyword>
<keyword id="KW-0489">Methyltransferase</keyword>
<keyword id="KW-0698">rRNA processing</keyword>
<keyword id="KW-0949">S-adenosyl-L-methionine</keyword>
<keyword id="KW-0808">Transferase</keyword>
<name>RLMH_BURL3</name>
<dbReference type="EC" id="2.1.1.177" evidence="1"/>
<dbReference type="EMBL" id="CP000151">
    <property type="protein sequence ID" value="ABB09220.1"/>
    <property type="molecule type" value="Genomic_DNA"/>
</dbReference>
<dbReference type="RefSeq" id="WP_011352746.1">
    <property type="nucleotide sequence ID" value="NZ_WNDV01000008.1"/>
</dbReference>
<dbReference type="SMR" id="Q39E96"/>
<dbReference type="GeneID" id="93191258"/>
<dbReference type="KEGG" id="bur:Bcep18194_A5626"/>
<dbReference type="HOGENOM" id="CLU_100552_1_0_4"/>
<dbReference type="Proteomes" id="UP000002705">
    <property type="component" value="Chromosome 1"/>
</dbReference>
<dbReference type="GO" id="GO:0005737">
    <property type="term" value="C:cytoplasm"/>
    <property type="evidence" value="ECO:0007669"/>
    <property type="project" value="UniProtKB-SubCell"/>
</dbReference>
<dbReference type="GO" id="GO:0070038">
    <property type="term" value="F:rRNA (pseudouridine-N3-)-methyltransferase activity"/>
    <property type="evidence" value="ECO:0007669"/>
    <property type="project" value="UniProtKB-UniRule"/>
</dbReference>
<dbReference type="CDD" id="cd18081">
    <property type="entry name" value="RlmH-like"/>
    <property type="match status" value="1"/>
</dbReference>
<dbReference type="Gene3D" id="3.40.1280.10">
    <property type="match status" value="1"/>
</dbReference>
<dbReference type="HAMAP" id="MF_00658">
    <property type="entry name" value="23SrRNA_methyltr_H"/>
    <property type="match status" value="1"/>
</dbReference>
<dbReference type="InterPro" id="IPR029028">
    <property type="entry name" value="Alpha/beta_knot_MTases"/>
</dbReference>
<dbReference type="InterPro" id="IPR003742">
    <property type="entry name" value="RlmH-like"/>
</dbReference>
<dbReference type="InterPro" id="IPR029026">
    <property type="entry name" value="tRNA_m1G_MTases_N"/>
</dbReference>
<dbReference type="NCBIfam" id="NF000986">
    <property type="entry name" value="PRK00103.1-4"/>
    <property type="match status" value="1"/>
</dbReference>
<dbReference type="NCBIfam" id="TIGR00246">
    <property type="entry name" value="tRNA_RlmH_YbeA"/>
    <property type="match status" value="1"/>
</dbReference>
<dbReference type="PANTHER" id="PTHR33603">
    <property type="entry name" value="METHYLTRANSFERASE"/>
    <property type="match status" value="1"/>
</dbReference>
<dbReference type="PANTHER" id="PTHR33603:SF1">
    <property type="entry name" value="RIBOSOMAL RNA LARGE SUBUNIT METHYLTRANSFERASE H"/>
    <property type="match status" value="1"/>
</dbReference>
<dbReference type="Pfam" id="PF02590">
    <property type="entry name" value="SPOUT_MTase"/>
    <property type="match status" value="1"/>
</dbReference>
<dbReference type="PIRSF" id="PIRSF004505">
    <property type="entry name" value="MT_bac"/>
    <property type="match status" value="1"/>
</dbReference>
<dbReference type="SUPFAM" id="SSF75217">
    <property type="entry name" value="alpha/beta knot"/>
    <property type="match status" value="1"/>
</dbReference>
<comment type="function">
    <text evidence="1">Specifically methylates the pseudouridine at position 1915 (m3Psi1915) in 23S rRNA.</text>
</comment>
<comment type="catalytic activity">
    <reaction evidence="1">
        <text>pseudouridine(1915) in 23S rRNA + S-adenosyl-L-methionine = N(3)-methylpseudouridine(1915) in 23S rRNA + S-adenosyl-L-homocysteine + H(+)</text>
        <dbReference type="Rhea" id="RHEA:42752"/>
        <dbReference type="Rhea" id="RHEA-COMP:10221"/>
        <dbReference type="Rhea" id="RHEA-COMP:10222"/>
        <dbReference type="ChEBI" id="CHEBI:15378"/>
        <dbReference type="ChEBI" id="CHEBI:57856"/>
        <dbReference type="ChEBI" id="CHEBI:59789"/>
        <dbReference type="ChEBI" id="CHEBI:65314"/>
        <dbReference type="ChEBI" id="CHEBI:74486"/>
        <dbReference type="EC" id="2.1.1.177"/>
    </reaction>
</comment>
<comment type="subunit">
    <text evidence="1">Homodimer.</text>
</comment>
<comment type="subcellular location">
    <subcellularLocation>
        <location evidence="1">Cytoplasm</location>
    </subcellularLocation>
</comment>
<comment type="similarity">
    <text evidence="1">Belongs to the RNA methyltransferase RlmH family.</text>
</comment>